<keyword id="KW-0067">ATP-binding</keyword>
<keyword id="KW-1003">Cell membrane</keyword>
<keyword id="KW-0472">Membrane</keyword>
<keyword id="KW-0547">Nucleotide-binding</keyword>
<keyword id="KW-1278">Translocase</keyword>
<keyword id="KW-0813">Transport</keyword>
<evidence type="ECO:0000255" key="1">
    <source>
        <dbReference type="HAMAP-Rule" id="MF_01710"/>
    </source>
</evidence>
<feature type="chain" id="PRO_0000092053" description="Energy-coupling factor transporter ATP-binding protein EcfA">
    <location>
        <begin position="1"/>
        <end position="271"/>
    </location>
</feature>
<feature type="domain" description="ABC transporter" evidence="1">
    <location>
        <begin position="2"/>
        <end position="231"/>
    </location>
</feature>
<feature type="binding site" evidence="1">
    <location>
        <begin position="34"/>
        <end position="41"/>
    </location>
    <ligand>
        <name>ATP</name>
        <dbReference type="ChEBI" id="CHEBI:30616"/>
    </ligand>
</feature>
<proteinExistence type="inferred from homology"/>
<sequence>MISIQNLTFYYGCNPILKDLNLTIQNNSWVSIVGHNGSGKSTLAKILVGLLSCTKGQILIDNIVLNEKNLPLLRPKIGMVFQNPDYQFTGLTVREDIAFGLENHNVCREEIIAKVWQYAKMVKIDDLLDTNVNQLSGGQKQRVAIASILAMEPEIIIFDEVTSFLDPQGALEVQKIIQTIKNKILITITHDLEFAAKSDEIIVLDQGKLITQTPPQNLFQDPLFLQQYKLNPPLSLELYYEILKDSTTKNIKNNQMLENLKDILWQYNLKK</sequence>
<protein>
    <recommendedName>
        <fullName evidence="1">Energy-coupling factor transporter ATP-binding protein EcfA</fullName>
        <shortName evidence="1">ECF transporter A component EcfA</shortName>
        <ecNumber evidence="1">7.-.-.-</ecNumber>
    </recommendedName>
</protein>
<reference key="1">
    <citation type="journal article" date="2004" name="Nat. Genet.">
        <title>Reductive evolution suggested from the complete genome sequence of a plant-pathogenic phytoplasma.</title>
        <authorList>
            <person name="Oshima K."/>
            <person name="Kakizawa S."/>
            <person name="Nishigawa H."/>
            <person name="Jung H.-Y."/>
            <person name="Wei W."/>
            <person name="Suzuki S."/>
            <person name="Arashida R."/>
            <person name="Nakata D."/>
            <person name="Miyata S."/>
            <person name="Ugaki M."/>
            <person name="Namba S."/>
        </authorList>
    </citation>
    <scope>NUCLEOTIDE SEQUENCE [LARGE SCALE GENOMIC DNA]</scope>
    <source>
        <strain>OY-M</strain>
    </source>
</reference>
<organism>
    <name type="scientific">Onion yellows phytoplasma (strain OY-M)</name>
    <dbReference type="NCBI Taxonomy" id="262768"/>
    <lineage>
        <taxon>Bacteria</taxon>
        <taxon>Bacillati</taxon>
        <taxon>Mycoplasmatota</taxon>
        <taxon>Mollicutes</taxon>
        <taxon>Acholeplasmatales</taxon>
        <taxon>Acholeplasmataceae</taxon>
        <taxon>Candidatus Phytoplasma</taxon>
        <taxon>16SrI (Aster yellows group)</taxon>
    </lineage>
</organism>
<dbReference type="EC" id="7.-.-.-" evidence="1"/>
<dbReference type="EMBL" id="AP006628">
    <property type="protein sequence ID" value="BAD04264.1"/>
    <property type="molecule type" value="Genomic_DNA"/>
</dbReference>
<dbReference type="SMR" id="Q6YR39"/>
<dbReference type="STRING" id="262768.PAM_179"/>
<dbReference type="KEGG" id="poy:PAM_179"/>
<dbReference type="eggNOG" id="COG1122">
    <property type="taxonomic scope" value="Bacteria"/>
</dbReference>
<dbReference type="HOGENOM" id="CLU_000604_1_22_14"/>
<dbReference type="BioCyc" id="OYEL262768:G1G26-219-MONOMER"/>
<dbReference type="Proteomes" id="UP000002523">
    <property type="component" value="Chromosome"/>
</dbReference>
<dbReference type="GO" id="GO:0043190">
    <property type="term" value="C:ATP-binding cassette (ABC) transporter complex"/>
    <property type="evidence" value="ECO:0007669"/>
    <property type="project" value="TreeGrafter"/>
</dbReference>
<dbReference type="GO" id="GO:0005524">
    <property type="term" value="F:ATP binding"/>
    <property type="evidence" value="ECO:0007669"/>
    <property type="project" value="UniProtKB-KW"/>
</dbReference>
<dbReference type="GO" id="GO:0016887">
    <property type="term" value="F:ATP hydrolysis activity"/>
    <property type="evidence" value="ECO:0007669"/>
    <property type="project" value="InterPro"/>
</dbReference>
<dbReference type="GO" id="GO:0042626">
    <property type="term" value="F:ATPase-coupled transmembrane transporter activity"/>
    <property type="evidence" value="ECO:0007669"/>
    <property type="project" value="TreeGrafter"/>
</dbReference>
<dbReference type="CDD" id="cd03225">
    <property type="entry name" value="ABC_cobalt_CbiO_domain1"/>
    <property type="match status" value="1"/>
</dbReference>
<dbReference type="FunFam" id="3.40.50.300:FF:000224">
    <property type="entry name" value="Energy-coupling factor transporter ATP-binding protein EcfA"/>
    <property type="match status" value="1"/>
</dbReference>
<dbReference type="Gene3D" id="3.40.50.300">
    <property type="entry name" value="P-loop containing nucleotide triphosphate hydrolases"/>
    <property type="match status" value="1"/>
</dbReference>
<dbReference type="InterPro" id="IPR003593">
    <property type="entry name" value="AAA+_ATPase"/>
</dbReference>
<dbReference type="InterPro" id="IPR003439">
    <property type="entry name" value="ABC_transporter-like_ATP-bd"/>
</dbReference>
<dbReference type="InterPro" id="IPR017871">
    <property type="entry name" value="ABC_transporter-like_CS"/>
</dbReference>
<dbReference type="InterPro" id="IPR015856">
    <property type="entry name" value="ABC_transpr_CbiO/EcfA_su"/>
</dbReference>
<dbReference type="InterPro" id="IPR050095">
    <property type="entry name" value="ECF_ABC_transporter_ATP-bd"/>
</dbReference>
<dbReference type="InterPro" id="IPR027417">
    <property type="entry name" value="P-loop_NTPase"/>
</dbReference>
<dbReference type="PANTHER" id="PTHR43553:SF24">
    <property type="entry name" value="ENERGY-COUPLING FACTOR TRANSPORTER ATP-BINDING PROTEIN ECFA1"/>
    <property type="match status" value="1"/>
</dbReference>
<dbReference type="PANTHER" id="PTHR43553">
    <property type="entry name" value="HEAVY METAL TRANSPORTER"/>
    <property type="match status" value="1"/>
</dbReference>
<dbReference type="Pfam" id="PF00005">
    <property type="entry name" value="ABC_tran"/>
    <property type="match status" value="1"/>
</dbReference>
<dbReference type="SMART" id="SM00382">
    <property type="entry name" value="AAA"/>
    <property type="match status" value="1"/>
</dbReference>
<dbReference type="SUPFAM" id="SSF52540">
    <property type="entry name" value="P-loop containing nucleoside triphosphate hydrolases"/>
    <property type="match status" value="1"/>
</dbReference>
<dbReference type="PROSITE" id="PS00211">
    <property type="entry name" value="ABC_TRANSPORTER_1"/>
    <property type="match status" value="1"/>
</dbReference>
<dbReference type="PROSITE" id="PS50893">
    <property type="entry name" value="ABC_TRANSPORTER_2"/>
    <property type="match status" value="1"/>
</dbReference>
<dbReference type="PROSITE" id="PS51246">
    <property type="entry name" value="CBIO"/>
    <property type="match status" value="1"/>
</dbReference>
<gene>
    <name evidence="1" type="primary">ecfA</name>
    <name type="synonym">cbiO</name>
    <name type="ordered locus">PAM_179</name>
</gene>
<accession>Q6YR39</accession>
<comment type="function">
    <text evidence="1">ATP-binding (A) component of a common energy-coupling factor (ECF) ABC-transporter complex. Unlike classic ABC transporters this ECF transporter provides the energy necessary to transport a number of different substrates.</text>
</comment>
<comment type="subunit">
    <text evidence="1">Forms a stable energy-coupling factor (ECF) transporter complex composed of 2 membrane-embedded substrate-binding proteins (S component), 2 ATP-binding proteins (A component) and 2 transmembrane proteins (T component).</text>
</comment>
<comment type="subcellular location">
    <subcellularLocation>
        <location evidence="1">Cell membrane</location>
        <topology evidence="1">Peripheral membrane protein</topology>
    </subcellularLocation>
</comment>
<comment type="similarity">
    <text evidence="1">Belongs to the ABC transporter superfamily. Energy-coupling factor EcfA family.</text>
</comment>
<name>ECFA_ONYPE</name>